<feature type="chain" id="PRO_0000313775" description="Virginiamycin B lyase">
    <location>
        <begin position="1"/>
        <end position="290"/>
    </location>
</feature>
<feature type="active site" description="Proton acceptor" evidence="1">
    <location>
        <position position="267"/>
    </location>
</feature>
<feature type="binding site" evidence="1">
    <location>
        <position position="226"/>
    </location>
    <ligand>
        <name>substrate</name>
    </ligand>
</feature>
<feature type="binding site" evidence="1">
    <location>
        <position position="265"/>
    </location>
    <ligand>
        <name>Mg(2+)</name>
        <dbReference type="ChEBI" id="CHEBI:18420"/>
    </ligand>
</feature>
<feature type="binding site" evidence="1">
    <location>
        <position position="282"/>
    </location>
    <ligand>
        <name>Mg(2+)</name>
        <dbReference type="ChEBI" id="CHEBI:18420"/>
    </ligand>
</feature>
<organism>
    <name type="scientific">Mycolicibacterium vanbaalenii (strain DSM 7251 / JCM 13017 / BCRC 16820 / KCTC 9966 / NRRL B-24157 / PYR-1)</name>
    <name type="common">Mycobacterium vanbaalenii</name>
    <dbReference type="NCBI Taxonomy" id="350058"/>
    <lineage>
        <taxon>Bacteria</taxon>
        <taxon>Bacillati</taxon>
        <taxon>Actinomycetota</taxon>
        <taxon>Actinomycetes</taxon>
        <taxon>Mycobacteriales</taxon>
        <taxon>Mycobacteriaceae</taxon>
        <taxon>Mycolicibacterium</taxon>
    </lineage>
</organism>
<gene>
    <name evidence="1" type="primary">vgb</name>
    <name type="ordered locus">Mvan_1889</name>
</gene>
<name>VGB_MYCVP</name>
<sequence length="290" mass="30073">MIPRVTSTAQTDLTEGADPYGICAADDGALWVTLVHSGAVVRLSADGGRRDYPIGAQARPSVVTVGRDGTAWFTRTGDDRITALDRTGAMTTFELASGSGPFGICVGADGAVWFTESTGDRLGRIDPDATVSYVALPEGCFPAFVAAGADGAVWATLNHADAVVRILPSADPEVIDIPTPGAAPVGITWGGDAVWFVEIATGRIGRIGDDRLVTEFALPDPACRPHAITAGPDGCWFTEWATDRVGHIGRDGTVEEYDLPSSVSEPHGITVAPDGAVWVAAESGSVVRLG</sequence>
<reference key="1">
    <citation type="submission" date="2006-12" db="EMBL/GenBank/DDBJ databases">
        <title>Complete sequence of Mycobacterium vanbaalenii PYR-1.</title>
        <authorList>
            <consortium name="US DOE Joint Genome Institute"/>
            <person name="Copeland A."/>
            <person name="Lucas S."/>
            <person name="Lapidus A."/>
            <person name="Barry K."/>
            <person name="Detter J.C."/>
            <person name="Glavina del Rio T."/>
            <person name="Hammon N."/>
            <person name="Israni S."/>
            <person name="Dalin E."/>
            <person name="Tice H."/>
            <person name="Pitluck S."/>
            <person name="Singan V."/>
            <person name="Schmutz J."/>
            <person name="Larimer F."/>
            <person name="Land M."/>
            <person name="Hauser L."/>
            <person name="Kyrpides N."/>
            <person name="Anderson I.J."/>
            <person name="Miller C."/>
            <person name="Richardson P."/>
        </authorList>
    </citation>
    <scope>NUCLEOTIDE SEQUENCE [LARGE SCALE GENOMIC DNA]</scope>
    <source>
        <strain>DSM 7251 / JCM 13017 / BCRC 16820 / KCTC 9966 / NRRL B-24157 / PYR-1</strain>
    </source>
</reference>
<accession>A1T6B0</accession>
<keyword id="KW-0046">Antibiotic resistance</keyword>
<keyword id="KW-0456">Lyase</keyword>
<keyword id="KW-0460">Magnesium</keyword>
<keyword id="KW-0479">Metal-binding</keyword>
<dbReference type="EC" id="4.2.99.-" evidence="1"/>
<dbReference type="EMBL" id="CP000511">
    <property type="protein sequence ID" value="ABM12710.1"/>
    <property type="molecule type" value="Genomic_DNA"/>
</dbReference>
<dbReference type="RefSeq" id="WP_011779128.1">
    <property type="nucleotide sequence ID" value="NC_008726.1"/>
</dbReference>
<dbReference type="SMR" id="A1T6B0"/>
<dbReference type="STRING" id="350058.Mvan_1889"/>
<dbReference type="KEGG" id="mva:Mvan_1889"/>
<dbReference type="eggNOG" id="COG4257">
    <property type="taxonomic scope" value="Bacteria"/>
</dbReference>
<dbReference type="HOGENOM" id="CLU_054751_1_0_11"/>
<dbReference type="Proteomes" id="UP000009159">
    <property type="component" value="Chromosome"/>
</dbReference>
<dbReference type="GO" id="GO:0016835">
    <property type="term" value="F:carbon-oxygen lyase activity"/>
    <property type="evidence" value="ECO:0007669"/>
    <property type="project" value="UniProtKB-UniRule"/>
</dbReference>
<dbReference type="GO" id="GO:0000287">
    <property type="term" value="F:magnesium ion binding"/>
    <property type="evidence" value="ECO:0007669"/>
    <property type="project" value="InterPro"/>
</dbReference>
<dbReference type="GO" id="GO:0017001">
    <property type="term" value="P:antibiotic catabolic process"/>
    <property type="evidence" value="ECO:0007669"/>
    <property type="project" value="UniProtKB-UniRule"/>
</dbReference>
<dbReference type="GO" id="GO:0046677">
    <property type="term" value="P:response to antibiotic"/>
    <property type="evidence" value="ECO:0007669"/>
    <property type="project" value="UniProtKB-KW"/>
</dbReference>
<dbReference type="Gene3D" id="2.130.10.10">
    <property type="entry name" value="YVTN repeat-like/Quinoprotein amine dehydrogenase"/>
    <property type="match status" value="1"/>
</dbReference>
<dbReference type="HAMAP" id="MF_01282">
    <property type="entry name" value="VirginiamycinB_lyase"/>
    <property type="match status" value="1"/>
</dbReference>
<dbReference type="InterPro" id="IPR011217">
    <property type="entry name" value="Streptogrm_lyase"/>
</dbReference>
<dbReference type="InterPro" id="IPR051344">
    <property type="entry name" value="Vgb"/>
</dbReference>
<dbReference type="InterPro" id="IPR015943">
    <property type="entry name" value="WD40/YVTN_repeat-like_dom_sf"/>
</dbReference>
<dbReference type="PANTHER" id="PTHR40274">
    <property type="entry name" value="VIRGINIAMYCIN B LYASE"/>
    <property type="match status" value="1"/>
</dbReference>
<dbReference type="PANTHER" id="PTHR40274:SF3">
    <property type="entry name" value="VIRGINIAMYCIN B LYASE"/>
    <property type="match status" value="1"/>
</dbReference>
<dbReference type="Pfam" id="PF24684">
    <property type="entry name" value="Vgb_lyase"/>
    <property type="match status" value="1"/>
</dbReference>
<dbReference type="PIRSF" id="PIRSF026412">
    <property type="entry name" value="Streptogrm_lyase"/>
    <property type="match status" value="1"/>
</dbReference>
<dbReference type="SUPFAM" id="SSF63829">
    <property type="entry name" value="Calcium-dependent phosphotriesterase"/>
    <property type="match status" value="1"/>
</dbReference>
<dbReference type="SUPFAM" id="SSF101898">
    <property type="entry name" value="NHL repeat"/>
    <property type="match status" value="1"/>
</dbReference>
<proteinExistence type="inferred from homology"/>
<comment type="function">
    <text evidence="1">Inactivates the type B streptogramin antibiotics by linearizing the lactone ring at the ester linkage, generating a free phenylglycine carboxylate and converting the threonyl moiety into 2-amino-butenoic acid.</text>
</comment>
<comment type="cofactor">
    <cofactor evidence="1">
        <name>Mg(2+)</name>
        <dbReference type="ChEBI" id="CHEBI:18420"/>
    </cofactor>
</comment>
<comment type="subunit">
    <text evidence="1">Monomer.</text>
</comment>
<comment type="similarity">
    <text evidence="1">Belongs to the Vgb family.</text>
</comment>
<evidence type="ECO:0000255" key="1">
    <source>
        <dbReference type="HAMAP-Rule" id="MF_01282"/>
    </source>
</evidence>
<protein>
    <recommendedName>
        <fullName evidence="1">Virginiamycin B lyase</fullName>
        <ecNumber evidence="1">4.2.99.-</ecNumber>
    </recommendedName>
    <alternativeName>
        <fullName evidence="1">Streptogramin B lyase</fullName>
    </alternativeName>
</protein>